<reference key="1">
    <citation type="submission" date="1997-04" db="EMBL/GenBank/DDBJ databases">
        <authorList>
            <person name="Fu J."/>
            <person name="Chen X."/>
            <person name="Stern D."/>
            <person name="Yan S.D."/>
        </authorList>
    </citation>
    <scope>NUCLEOTIDE SEQUENCE [MRNA]</scope>
    <source>
        <strain>C57BL/6 X CBA</strain>
    </source>
</reference>
<reference key="2">
    <citation type="submission" date="2005-07" db="UniProtKB">
        <authorList>
            <person name="Bienvenut W.V."/>
        </authorList>
    </citation>
    <scope>PROTEIN SEQUENCE OF 2-6; 193-212 AND 215-226</scope>
    <scope>CLEAVAGE OF INITIATOR METHIONINE</scope>
    <scope>ACETYLATION AT ALA-2</scope>
    <scope>IDENTIFICATION BY MASS SPECTROMETRY</scope>
    <source>
        <strain>C57BL/6J</strain>
        <tissue>Liver</tissue>
    </source>
</reference>
<reference key="3">
    <citation type="submission" date="2007-04" db="UniProtKB">
        <authorList>
            <person name="Lubec G."/>
            <person name="Kang S.U."/>
        </authorList>
    </citation>
    <scope>PROTEIN SEQUENCE OF 70-79 AND 131-147</scope>
    <scope>IDENTIFICATION BY MASS SPECTROMETRY</scope>
    <source>
        <strain>C57BL/6J</strain>
        <tissue>Brain</tissue>
    </source>
</reference>
<reference key="4">
    <citation type="journal article" date="2010" name="Cell">
        <title>A tissue-specific atlas of mouse protein phosphorylation and expression.</title>
        <authorList>
            <person name="Huttlin E.L."/>
            <person name="Jedrychowski M.P."/>
            <person name="Elias J.E."/>
            <person name="Goswami T."/>
            <person name="Rad R."/>
            <person name="Beausoleil S.A."/>
            <person name="Villen J."/>
            <person name="Haas W."/>
            <person name="Sowa M.E."/>
            <person name="Gygi S.P."/>
        </authorList>
    </citation>
    <scope>IDENTIFICATION BY MASS SPECTROMETRY [LARGE SCALE ANALYSIS]</scope>
    <source>
        <tissue>Brain</tissue>
        <tissue>Brown adipose tissue</tissue>
        <tissue>Heart</tissue>
        <tissue>Kidney</tissue>
        <tissue>Liver</tissue>
        <tissue>Lung</tissue>
        <tissue>Pancreas</tissue>
        <tissue>Spleen</tissue>
        <tissue>Testis</tissue>
    </source>
</reference>
<reference key="5">
    <citation type="journal article" date="2010" name="EMBO Mol. Med.">
        <title>A non-enzymatic function of 17beta-hydroxysteroid dehydrogenase type 10 is required for mitochondrial integrity and cell survival.</title>
        <authorList>
            <person name="Rauschenberger K."/>
            <person name="Schoeler K."/>
            <person name="Sass J.O."/>
            <person name="Sauer S."/>
            <person name="Djuric Z."/>
            <person name="Rumig C."/>
            <person name="Wolf N.I."/>
            <person name="Okun J.G."/>
            <person name="Koelker S."/>
            <person name="Schwarz H."/>
            <person name="Fischer C."/>
            <person name="Grziwa B."/>
            <person name="Runz H."/>
            <person name="Nuemann A."/>
            <person name="Shafqat N."/>
            <person name="Kavanagh K.L."/>
            <person name="Haemmerling G."/>
            <person name="Wanders R.J."/>
            <person name="Shield J.P."/>
            <person name="Wendel U."/>
            <person name="Stern D."/>
            <person name="Nawroth P."/>
            <person name="Hoffmann G.F."/>
            <person name="Bartram C.R."/>
            <person name="Arnold B."/>
            <person name="Bierhaus A."/>
            <person name="Oppermann U."/>
            <person name="Steinbeisser H."/>
            <person name="Zschocke J."/>
        </authorList>
    </citation>
    <scope>FUNCTION</scope>
    <scope>DISRUPTION PHENOTYPE</scope>
</reference>
<reference key="6">
    <citation type="journal article" date="2013" name="Mol. Cell">
        <title>SIRT5-mediated lysine desuccinylation impacts diverse metabolic pathways.</title>
        <authorList>
            <person name="Park J."/>
            <person name="Chen Y."/>
            <person name="Tishkoff D.X."/>
            <person name="Peng C."/>
            <person name="Tan M."/>
            <person name="Dai L."/>
            <person name="Xie Z."/>
            <person name="Zhang Y."/>
            <person name="Zwaans B.M."/>
            <person name="Skinner M.E."/>
            <person name="Lombard D.B."/>
            <person name="Zhao Y."/>
        </authorList>
    </citation>
    <scope>SUCCINYLATION [LARGE SCALE ANALYSIS] AT LYS-53; LYS-107 AND LYS-212</scope>
    <scope>IDENTIFICATION BY MASS SPECTROMETRY [LARGE SCALE ANALYSIS]</scope>
    <source>
        <tissue>Embryonic fibroblast</tissue>
        <tissue>Liver</tissue>
    </source>
</reference>
<reference key="7">
    <citation type="journal article" date="2013" name="Proc. Natl. Acad. Sci. U.S.A.">
        <title>Label-free quantitative proteomics of the lysine acetylome in mitochondria identifies substrates of SIRT3 in metabolic pathways.</title>
        <authorList>
            <person name="Rardin M.J."/>
            <person name="Newman J.C."/>
            <person name="Held J.M."/>
            <person name="Cusack M.P."/>
            <person name="Sorensen D.J."/>
            <person name="Li B."/>
            <person name="Schilling B."/>
            <person name="Mooney S.D."/>
            <person name="Kahn C.R."/>
            <person name="Verdin E."/>
            <person name="Gibson B.W."/>
        </authorList>
    </citation>
    <scope>ACETYLATION [LARGE SCALE ANALYSIS] AT LYS-53; LYS-69; LYS-99; LYS-105; LYS-107 AND LYS-212</scope>
    <scope>IDENTIFICATION BY MASS SPECTROMETRY [LARGE SCALE ANALYSIS]</scope>
    <source>
        <tissue>Liver</tissue>
    </source>
</reference>
<proteinExistence type="evidence at protein level"/>
<name>HCD2_MOUSE</name>
<protein>
    <recommendedName>
        <fullName>3-hydroxyacyl-CoA dehydrogenase type-2</fullName>
        <ecNumber evidence="1">1.1.1.35</ecNumber>
    </recommendedName>
    <alternativeName>
        <fullName>17-beta-estradiol 17-dehydrogenase</fullName>
        <ecNumber evidence="1">1.1.1.62</ecNumber>
    </alternativeName>
    <alternativeName>
        <fullName evidence="1">2-methyl-3-hydroxybutyryl-CoA dehydrogenase</fullName>
        <shortName evidence="1">MHBD</shortName>
    </alternativeName>
    <alternativeName>
        <fullName>3-alpha-(17-beta)-hydroxysteroid dehydrogenase (NAD(+))</fullName>
        <ecNumber evidence="1">1.1.1.239</ecNumber>
    </alternativeName>
    <alternativeName>
        <fullName>3-hydroxy-2-methylbutyryl-CoA dehydrogenase</fullName>
        <ecNumber evidence="1">1.1.1.178</ecNumber>
    </alternativeName>
    <alternativeName>
        <fullName>3-hydroxyacyl-CoA dehydrogenase type II</fullName>
    </alternativeName>
    <alternativeName>
        <fullName>3alpha(or 20beta)-hydroxysteroid dehydrogenase</fullName>
        <ecNumber evidence="1">1.1.1.53</ecNumber>
    </alternativeName>
    <alternativeName>
        <fullName>7-alpha-hydroxysteroid dehydrogenase</fullName>
        <ecNumber evidence="1">1.1.1.159</ecNumber>
    </alternativeName>
    <alternativeName>
        <fullName>Endoplasmic reticulum-associated amyloid beta-peptide-binding protein</fullName>
    </alternativeName>
    <alternativeName>
        <fullName>Mitochondrial ribonuclease P protein 2</fullName>
        <shortName>Mitochondrial RNase P protein 2</shortName>
    </alternativeName>
    <alternativeName>
        <fullName>Short chain dehydrogenase/reductase family 5C member 1</fullName>
    </alternativeName>
    <alternativeName>
        <fullName>Short-chain type dehydrogenase/reductase XH98G2</fullName>
    </alternativeName>
    <alternativeName>
        <fullName>Type II HADH</fullName>
    </alternativeName>
</protein>
<feature type="initiator methionine" description="Removed" evidence="4">
    <location>
        <position position="1"/>
    </location>
</feature>
<feature type="chain" id="PRO_0000054811" description="3-hydroxyacyl-CoA dehydrogenase type-2">
    <location>
        <begin position="2"/>
        <end position="261"/>
    </location>
</feature>
<feature type="active site" description="Proton acceptor" evidence="2">
    <location>
        <position position="168"/>
    </location>
</feature>
<feature type="binding site" evidence="1">
    <location>
        <position position="20"/>
    </location>
    <ligand>
        <name>NAD(+)</name>
        <dbReference type="ChEBI" id="CHEBI:57540"/>
    </ligand>
</feature>
<feature type="binding site" evidence="1">
    <location>
        <position position="41"/>
    </location>
    <ligand>
        <name>NAD(+)</name>
        <dbReference type="ChEBI" id="CHEBI:57540"/>
    </ligand>
</feature>
<feature type="binding site" evidence="1">
    <location>
        <position position="65"/>
    </location>
    <ligand>
        <name>NAD(+)</name>
        <dbReference type="ChEBI" id="CHEBI:57540"/>
    </ligand>
</feature>
<feature type="binding site" evidence="1">
    <location>
        <position position="91"/>
    </location>
    <ligand>
        <name>NAD(+)</name>
        <dbReference type="ChEBI" id="CHEBI:57540"/>
    </ligand>
</feature>
<feature type="binding site" evidence="1">
    <location>
        <position position="155"/>
    </location>
    <ligand>
        <name>substrate</name>
    </ligand>
</feature>
<feature type="binding site" evidence="1">
    <location>
        <position position="168"/>
    </location>
    <ligand>
        <name>NAD(+)</name>
        <dbReference type="ChEBI" id="CHEBI:57540"/>
    </ligand>
</feature>
<feature type="binding site" evidence="1">
    <location>
        <position position="172"/>
    </location>
    <ligand>
        <name>NAD(+)</name>
        <dbReference type="ChEBI" id="CHEBI:57540"/>
    </ligand>
</feature>
<feature type="binding site" evidence="1">
    <location>
        <position position="201"/>
    </location>
    <ligand>
        <name>NAD(+)</name>
        <dbReference type="ChEBI" id="CHEBI:57540"/>
    </ligand>
</feature>
<feature type="binding site" evidence="1">
    <location>
        <position position="203"/>
    </location>
    <ligand>
        <name>NAD(+)</name>
        <dbReference type="ChEBI" id="CHEBI:57540"/>
    </ligand>
</feature>
<feature type="modified residue" description="N-acetylalanine" evidence="4">
    <location>
        <position position="2"/>
    </location>
</feature>
<feature type="modified residue" description="N6-acetyllysine; alternate" evidence="6">
    <location>
        <position position="53"/>
    </location>
</feature>
<feature type="modified residue" description="N6-succinyllysine; alternate" evidence="7">
    <location>
        <position position="53"/>
    </location>
</feature>
<feature type="modified residue" description="N6-acetyllysine" evidence="6">
    <location>
        <position position="69"/>
    </location>
</feature>
<feature type="modified residue" description="N6-acetyllysine" evidence="6">
    <location>
        <position position="99"/>
    </location>
</feature>
<feature type="modified residue" description="N6-acetyllysine" evidence="6">
    <location>
        <position position="105"/>
    </location>
</feature>
<feature type="modified residue" description="N6-acetyllysine; alternate" evidence="6">
    <location>
        <position position="107"/>
    </location>
</feature>
<feature type="modified residue" description="N6-succinyllysine; alternate" evidence="7">
    <location>
        <position position="107"/>
    </location>
</feature>
<feature type="modified residue" description="N6-acetyllysine; alternate" evidence="6">
    <location>
        <position position="212"/>
    </location>
</feature>
<feature type="modified residue" description="N6-succinyllysine; alternate" evidence="7">
    <location>
        <position position="212"/>
    </location>
</feature>
<evidence type="ECO:0000250" key="1">
    <source>
        <dbReference type="UniProtKB" id="Q99714"/>
    </source>
</evidence>
<evidence type="ECO:0000255" key="2">
    <source>
        <dbReference type="PROSITE-ProRule" id="PRU10001"/>
    </source>
</evidence>
<evidence type="ECO:0000269" key="3">
    <source>
    </source>
</evidence>
<evidence type="ECO:0000269" key="4">
    <source ref="2"/>
</evidence>
<evidence type="ECO:0000305" key="5"/>
<evidence type="ECO:0007744" key="6">
    <source>
    </source>
</evidence>
<evidence type="ECO:0007744" key="7">
    <source>
    </source>
</evidence>
<organism>
    <name type="scientific">Mus musculus</name>
    <name type="common">Mouse</name>
    <dbReference type="NCBI Taxonomy" id="10090"/>
    <lineage>
        <taxon>Eukaryota</taxon>
        <taxon>Metazoa</taxon>
        <taxon>Chordata</taxon>
        <taxon>Craniata</taxon>
        <taxon>Vertebrata</taxon>
        <taxon>Euteleostomi</taxon>
        <taxon>Mammalia</taxon>
        <taxon>Eutheria</taxon>
        <taxon>Euarchontoglires</taxon>
        <taxon>Glires</taxon>
        <taxon>Rodentia</taxon>
        <taxon>Myomorpha</taxon>
        <taxon>Muroidea</taxon>
        <taxon>Muridae</taxon>
        <taxon>Murinae</taxon>
        <taxon>Mus</taxon>
        <taxon>Mus</taxon>
    </lineage>
</organism>
<gene>
    <name type="primary">Hsd17b10</name>
    <name type="synonym">Erab</name>
    <name type="synonym">Hadh2</name>
</gene>
<accession>O08756</accession>
<keyword id="KW-0007">Acetylation</keyword>
<keyword id="KW-0903">Direct protein sequencing</keyword>
<keyword id="KW-0276">Fatty acid metabolism</keyword>
<keyword id="KW-0443">Lipid metabolism</keyword>
<keyword id="KW-0496">Mitochondrion</keyword>
<keyword id="KW-1135">Mitochondrion nucleoid</keyword>
<keyword id="KW-0520">NAD</keyword>
<keyword id="KW-0560">Oxidoreductase</keyword>
<keyword id="KW-1185">Reference proteome</keyword>
<keyword id="KW-0753">Steroid metabolism</keyword>
<keyword id="KW-0819">tRNA processing</keyword>
<comment type="function">
    <text evidence="1 3">Mitochondrial dehydrogenase involved in pathways of fatty acid, branched-chain amino acid and steroid metabolism (By similarity). Acts as (S)-3-hydroxyacyl-CoA dehydrogenase in mitochondrial fatty acid beta-oxidation, a major degradation pathway of fatty acids. Catalyzes the third step in the beta-oxidation cycle, namely the reversible conversion of (S)-3-hydroxyacyl-CoA to 3-ketoacyl-CoA. Preferentially accepts straight medium- and short-chain acyl-CoA substrates with highest efficiency for (3S)-hydroxybutanoyl-CoA (By similarity). Acts as 3-hydroxy-2-methylbutyryl-CoA dehydrogenase in branched-chain amino acid catabolic pathway. Catalyzes the oxidation of 3-hydroxy-2-methylbutanoyl-CoA into 2-methyl-3-oxobutanoyl-CoA, a step in isoleucine degradation pathway (By similarity). Has hydroxysteroid dehydrogenase activity toward steroid hormones and bile acids. Catalyzes the oxidation of 3alpha-, 17beta-, 20beta- and 21-hydroxysteroids and 7alpha- and 7beta-hydroxy bile acids. Oxidizes allopregnanolone/brexanolone at the 3alpha-hydroxyl group, which is known to be critical for the activation of gamma-aminobutyric acid receptors (GABAARs) chloride channel. Has phospholipase C-like activity toward cardiolipin and its oxidized species (By similarity). Likely oxidizes the 2'-hydroxyl in the head group of cardiolipin to form a ketone intermediate that undergoes nucleophilic attack by water and fragments into diacylglycerol, dihydroxyacetone and orthophosphate. Has higher affinity for cardiolipin with oxidized fatty acids and may degrade these species during the oxidative stress response to protect cells from apoptosis (By similarity). By interacting with intracellular amyloid-beta, it may contribute to the neuronal dysfunction associated with Alzheimer disease (AD) (By similarity). Essential for structural and functional integrity of mitochondria (PubMed:20077426).</text>
</comment>
<comment type="function">
    <text evidence="1">In addition to mitochondrial dehydrogenase activity, moonlights as a component of mitochondrial ribonuclease P, a complex that cleaves tRNA molecules in their 5'-ends. Together with TRMT10C/MRPP1, forms a subcomplex of the mitochondrial ribonuclease P, named MRPP1-MRPP2 subcomplex, which displays functions that are independent of the ribonuclease P activity. The MRPP1-MRPP2 subcomplex catalyzes the formation of N(1)-methylguanine and N(1)-methyladenine at position 9 (m1G9 and m1A9, respectively) in tRNAs; HSD17B10/MRPP2 acting as a non-catalytic subunit. The MRPP1-MRPP2 subcomplex also acts as a tRNA maturation platform: following 5'-end cleavage by the mitochondrial ribonuclease P complex, the MRPP1-MRPP2 subcomplex enhances the efficiency of 3'-processing catalyzed by ELAC2, retains the tRNA product after ELAC2 processing and presents the nascent tRNA to the mitochondrial CCA tRNA nucleotidyltransferase TRNT1 enzyme. Associates with mitochondrial DNA complexes at the nucleoids to initiate RNA processing and ribosome assembly.</text>
</comment>
<comment type="catalytic activity">
    <reaction evidence="1">
        <text>a (3S)-3-hydroxyacyl-CoA + NAD(+) = a 3-oxoacyl-CoA + NADH + H(+)</text>
        <dbReference type="Rhea" id="RHEA:22432"/>
        <dbReference type="ChEBI" id="CHEBI:15378"/>
        <dbReference type="ChEBI" id="CHEBI:57318"/>
        <dbReference type="ChEBI" id="CHEBI:57540"/>
        <dbReference type="ChEBI" id="CHEBI:57945"/>
        <dbReference type="ChEBI" id="CHEBI:90726"/>
        <dbReference type="EC" id="1.1.1.35"/>
    </reaction>
    <physiologicalReaction direction="left-to-right" evidence="1">
        <dbReference type="Rhea" id="RHEA:22433"/>
    </physiologicalReaction>
    <physiologicalReaction direction="right-to-left" evidence="1">
        <dbReference type="Rhea" id="RHEA:22434"/>
    </physiologicalReaction>
</comment>
<comment type="catalytic activity">
    <reaction evidence="1">
        <text>(2S,3S)-3-hydroxy-2-methylbutanoyl-CoA + NAD(+) = 2-methyl-3-oxobutanoyl-CoA + NADH + H(+)</text>
        <dbReference type="Rhea" id="RHEA:13281"/>
        <dbReference type="ChEBI" id="CHEBI:15378"/>
        <dbReference type="ChEBI" id="CHEBI:57312"/>
        <dbReference type="ChEBI" id="CHEBI:57335"/>
        <dbReference type="ChEBI" id="CHEBI:57540"/>
        <dbReference type="ChEBI" id="CHEBI:57945"/>
        <dbReference type="EC" id="1.1.1.178"/>
    </reaction>
    <physiologicalReaction direction="left-to-right" evidence="1">
        <dbReference type="Rhea" id="RHEA:13282"/>
    </physiologicalReaction>
</comment>
<comment type="catalytic activity">
    <reaction evidence="1">
        <text>testosterone + NAD(+) = androst-4-ene-3,17-dione + NADH + H(+)</text>
        <dbReference type="Rhea" id="RHEA:14929"/>
        <dbReference type="ChEBI" id="CHEBI:15378"/>
        <dbReference type="ChEBI" id="CHEBI:16422"/>
        <dbReference type="ChEBI" id="CHEBI:17347"/>
        <dbReference type="ChEBI" id="CHEBI:57540"/>
        <dbReference type="ChEBI" id="CHEBI:57945"/>
        <dbReference type="EC" id="1.1.1.239"/>
    </reaction>
    <physiologicalReaction direction="left-to-right" evidence="1">
        <dbReference type="Rhea" id="RHEA:14930"/>
    </physiologicalReaction>
</comment>
<comment type="catalytic activity">
    <reaction evidence="1">
        <text>5alpha-androstane-3alpha,17beta-diol + NAD(+) = 17beta-hydroxy-5alpha-androstan-3-one + NADH + H(+)</text>
        <dbReference type="Rhea" id="RHEA:42004"/>
        <dbReference type="ChEBI" id="CHEBI:15378"/>
        <dbReference type="ChEBI" id="CHEBI:16330"/>
        <dbReference type="ChEBI" id="CHEBI:36713"/>
        <dbReference type="ChEBI" id="CHEBI:57540"/>
        <dbReference type="ChEBI" id="CHEBI:57945"/>
        <dbReference type="EC" id="1.1.1.53"/>
    </reaction>
    <physiologicalReaction direction="right-to-left" evidence="1">
        <dbReference type="Rhea" id="RHEA:42006"/>
    </physiologicalReaction>
</comment>
<comment type="catalytic activity">
    <reaction evidence="1">
        <text>17beta-estradiol + NAD(+) = estrone + NADH + H(+)</text>
        <dbReference type="Rhea" id="RHEA:24612"/>
        <dbReference type="ChEBI" id="CHEBI:15378"/>
        <dbReference type="ChEBI" id="CHEBI:16469"/>
        <dbReference type="ChEBI" id="CHEBI:17263"/>
        <dbReference type="ChEBI" id="CHEBI:57540"/>
        <dbReference type="ChEBI" id="CHEBI:57945"/>
        <dbReference type="EC" id="1.1.1.62"/>
    </reaction>
    <physiologicalReaction direction="left-to-right" evidence="1">
        <dbReference type="Rhea" id="RHEA:24613"/>
    </physiologicalReaction>
</comment>
<comment type="catalytic activity">
    <reaction evidence="1">
        <text>cholate + NAD(+) = 3alpha,12alpha-dihydroxy-7-oxo-5beta-cholanate + NADH + H(+)</text>
        <dbReference type="Rhea" id="RHEA:19409"/>
        <dbReference type="ChEBI" id="CHEBI:11893"/>
        <dbReference type="ChEBI" id="CHEBI:15378"/>
        <dbReference type="ChEBI" id="CHEBI:29747"/>
        <dbReference type="ChEBI" id="CHEBI:57540"/>
        <dbReference type="ChEBI" id="CHEBI:57945"/>
        <dbReference type="EC" id="1.1.1.159"/>
    </reaction>
    <physiologicalReaction direction="left-to-right" evidence="1">
        <dbReference type="Rhea" id="RHEA:19410"/>
    </physiologicalReaction>
</comment>
<comment type="catalytic activity">
    <reaction evidence="1">
        <text>(3S)-3-hydroxybutanoyl-CoA + NAD(+) = acetoacetyl-CoA + NADH + H(+)</text>
        <dbReference type="Rhea" id="RHEA:30799"/>
        <dbReference type="ChEBI" id="CHEBI:15378"/>
        <dbReference type="ChEBI" id="CHEBI:57286"/>
        <dbReference type="ChEBI" id="CHEBI:57316"/>
        <dbReference type="ChEBI" id="CHEBI:57540"/>
        <dbReference type="ChEBI" id="CHEBI:57945"/>
    </reaction>
    <physiologicalReaction direction="left-to-right" evidence="1">
        <dbReference type="Rhea" id="RHEA:30800"/>
    </physiologicalReaction>
    <physiologicalReaction direction="right-to-left" evidence="1">
        <dbReference type="Rhea" id="RHEA:30801"/>
    </physiologicalReaction>
</comment>
<comment type="catalytic activity">
    <reaction evidence="1">
        <text>(3S)-hydroxyoctanoyl-CoA + NAD(+) = 3-oxooctanoyl-CoA + NADH + H(+)</text>
        <dbReference type="Rhea" id="RHEA:31195"/>
        <dbReference type="ChEBI" id="CHEBI:15378"/>
        <dbReference type="ChEBI" id="CHEBI:57540"/>
        <dbReference type="ChEBI" id="CHEBI:57945"/>
        <dbReference type="ChEBI" id="CHEBI:62617"/>
        <dbReference type="ChEBI" id="CHEBI:62619"/>
    </reaction>
    <physiologicalReaction direction="left-to-right" evidence="1">
        <dbReference type="Rhea" id="RHEA:31196"/>
    </physiologicalReaction>
    <physiologicalReaction direction="right-to-left" evidence="1">
        <dbReference type="Rhea" id="RHEA:31197"/>
    </physiologicalReaction>
</comment>
<comment type="catalytic activity">
    <reaction evidence="1">
        <text>(3S)-hydroxyhexadecanoyl-CoA + NAD(+) = 3-oxohexadecanoyl-CoA + NADH + H(+)</text>
        <dbReference type="Rhea" id="RHEA:31159"/>
        <dbReference type="ChEBI" id="CHEBI:15378"/>
        <dbReference type="ChEBI" id="CHEBI:57349"/>
        <dbReference type="ChEBI" id="CHEBI:57540"/>
        <dbReference type="ChEBI" id="CHEBI:57945"/>
        <dbReference type="ChEBI" id="CHEBI:62613"/>
    </reaction>
    <physiologicalReaction direction="left-to-right" evidence="1">
        <dbReference type="Rhea" id="RHEA:31160"/>
    </physiologicalReaction>
    <physiologicalReaction direction="right-to-left" evidence="1">
        <dbReference type="Rhea" id="RHEA:31161"/>
    </physiologicalReaction>
</comment>
<comment type="catalytic activity">
    <reaction evidence="1">
        <text>17beta-hydroxy-5alpha-androstan-3-one + NAD(+) = 5alpha-androstan-3,17-dione + NADH + H(+)</text>
        <dbReference type="Rhea" id="RHEA:41992"/>
        <dbReference type="ChEBI" id="CHEBI:15378"/>
        <dbReference type="ChEBI" id="CHEBI:15994"/>
        <dbReference type="ChEBI" id="CHEBI:16330"/>
        <dbReference type="ChEBI" id="CHEBI:57540"/>
        <dbReference type="ChEBI" id="CHEBI:57945"/>
    </reaction>
    <physiologicalReaction direction="left-to-right" evidence="1">
        <dbReference type="Rhea" id="RHEA:41993"/>
    </physiologicalReaction>
</comment>
<comment type="catalytic activity">
    <reaction evidence="1">
        <text>5alpha-pregnan-20beta-ol-3-one + NAD(+) = 5alpha-pregnane-3,20-dione + NADH + H(+)</text>
        <dbReference type="Rhea" id="RHEA:42008"/>
        <dbReference type="ChEBI" id="CHEBI:15378"/>
        <dbReference type="ChEBI" id="CHEBI:28952"/>
        <dbReference type="ChEBI" id="CHEBI:57540"/>
        <dbReference type="ChEBI" id="CHEBI:57945"/>
        <dbReference type="ChEBI" id="CHEBI:78594"/>
    </reaction>
    <physiologicalReaction direction="left-to-right" evidence="1">
        <dbReference type="Rhea" id="RHEA:42009"/>
    </physiologicalReaction>
</comment>
<comment type="catalytic activity">
    <reaction evidence="1">
        <text>3alpha-hydroxy-5alpha-pregnan-20-one + NAD(+) = 5alpha-pregnane-3,20-dione + NADH + H(+)</text>
        <dbReference type="Rhea" id="RHEA:41980"/>
        <dbReference type="ChEBI" id="CHEBI:15378"/>
        <dbReference type="ChEBI" id="CHEBI:28952"/>
        <dbReference type="ChEBI" id="CHEBI:50169"/>
        <dbReference type="ChEBI" id="CHEBI:57540"/>
        <dbReference type="ChEBI" id="CHEBI:57945"/>
    </reaction>
    <physiologicalReaction direction="left-to-right" evidence="1">
        <dbReference type="Rhea" id="RHEA:41981"/>
    </physiologicalReaction>
</comment>
<comment type="catalytic activity">
    <reaction evidence="1">
        <text>cortisone + NAD(+) = 17alpha-hydroxypregn-4-en-3,11,20-trione-21-al + NADH + H(+)</text>
        <dbReference type="Rhea" id="RHEA:42016"/>
        <dbReference type="ChEBI" id="CHEBI:15378"/>
        <dbReference type="ChEBI" id="CHEBI:16962"/>
        <dbReference type="ChEBI" id="CHEBI:57540"/>
        <dbReference type="ChEBI" id="CHEBI:57945"/>
        <dbReference type="ChEBI" id="CHEBI:78596"/>
    </reaction>
    <physiologicalReaction direction="left-to-right" evidence="1">
        <dbReference type="Rhea" id="RHEA:42017"/>
    </physiologicalReaction>
</comment>
<comment type="catalytic activity">
    <reaction evidence="1">
        <text>11-dehydrocorticosterone + NAD(+) = pregn-4-ene-3,11,20,21-tetraone + NADH + H(+)</text>
        <dbReference type="Rhea" id="RHEA:42020"/>
        <dbReference type="ChEBI" id="CHEBI:15378"/>
        <dbReference type="ChEBI" id="CHEBI:57540"/>
        <dbReference type="ChEBI" id="CHEBI:57945"/>
        <dbReference type="ChEBI" id="CHEBI:78600"/>
        <dbReference type="ChEBI" id="CHEBI:78601"/>
    </reaction>
    <physiologicalReaction direction="left-to-right" evidence="1">
        <dbReference type="Rhea" id="RHEA:42021"/>
    </physiologicalReaction>
</comment>
<comment type="catalytic activity">
    <reaction evidence="1">
        <text>cortisol + NAD(+) = 11beta,17alpha-dihydroxypregn-4-ene-3,20,21-trione + NADH + H(+)</text>
        <dbReference type="Rhea" id="RHEA:42012"/>
        <dbReference type="ChEBI" id="CHEBI:15378"/>
        <dbReference type="ChEBI" id="CHEBI:17650"/>
        <dbReference type="ChEBI" id="CHEBI:57540"/>
        <dbReference type="ChEBI" id="CHEBI:57945"/>
        <dbReference type="ChEBI" id="CHEBI:78595"/>
    </reaction>
    <physiologicalReaction direction="left-to-right" evidence="1">
        <dbReference type="Rhea" id="RHEA:42013"/>
    </physiologicalReaction>
</comment>
<comment type="catalytic activity">
    <reaction evidence="1">
        <text>chenodeoxycholate + NAD(+) = 7-oxolithocholate + NADH + H(+)</text>
        <dbReference type="Rhea" id="RHEA:42036"/>
        <dbReference type="ChEBI" id="CHEBI:15378"/>
        <dbReference type="ChEBI" id="CHEBI:36234"/>
        <dbReference type="ChEBI" id="CHEBI:57540"/>
        <dbReference type="ChEBI" id="CHEBI:57945"/>
        <dbReference type="ChEBI" id="CHEBI:78605"/>
    </reaction>
    <physiologicalReaction direction="left-to-right" evidence="1">
        <dbReference type="Rhea" id="RHEA:42037"/>
    </physiologicalReaction>
</comment>
<comment type="catalytic activity">
    <reaction evidence="1">
        <text>ursodeoxycholate + NAD(+) = 7-oxolithocholate + NADH + H(+)</text>
        <dbReference type="Rhea" id="RHEA:42028"/>
        <dbReference type="ChEBI" id="CHEBI:15378"/>
        <dbReference type="ChEBI" id="CHEBI:57540"/>
        <dbReference type="ChEBI" id="CHEBI:57945"/>
        <dbReference type="ChEBI" id="CHEBI:78604"/>
        <dbReference type="ChEBI" id="CHEBI:78605"/>
    </reaction>
    <physiologicalReaction direction="left-to-right" evidence="1">
        <dbReference type="Rhea" id="RHEA:42029"/>
    </physiologicalReaction>
</comment>
<comment type="catalytic activity">
    <reaction evidence="1">
        <text>3beta,7beta-dihydroxy-5beta-cholan-24-oate + NAD(+) = 3beta-hydroxy-7-oxo-5beta-cholan-24-oate + NADH + H(+)</text>
        <dbReference type="Rhea" id="RHEA:42024"/>
        <dbReference type="ChEBI" id="CHEBI:15378"/>
        <dbReference type="ChEBI" id="CHEBI:57540"/>
        <dbReference type="ChEBI" id="CHEBI:57945"/>
        <dbReference type="ChEBI" id="CHEBI:78602"/>
        <dbReference type="ChEBI" id="CHEBI:78603"/>
    </reaction>
    <physiologicalReaction direction="left-to-right" evidence="1">
        <dbReference type="Rhea" id="RHEA:42025"/>
    </physiologicalReaction>
</comment>
<comment type="pathway">
    <text evidence="1">Amino-acid degradation; L-isoleucine degradation.</text>
</comment>
<comment type="pathway">
    <text evidence="1">Lipid metabolism; fatty acid beta-oxidation.</text>
</comment>
<comment type="pathway">
    <text evidence="1">Steroid metabolism.</text>
</comment>
<comment type="pathway">
    <text evidence="1">Lipid metabolism; bile acid biosynthesis.</text>
</comment>
<comment type="subunit">
    <text evidence="1">Homotetramer. Component of mitochondrial ribonuclease P, a complex composed of TRMT10C/MRPP1, HSD17B10/MRPP2 and PRORP/MRPP3. Interacts with TRMT10C/MRPP1; forming the MRPP1-MRPP2 subcomplex of the mitochondrial ribonuclease P complex.</text>
</comment>
<comment type="subcellular location">
    <subcellularLocation>
        <location evidence="1">Mitochondrion</location>
    </subcellularLocation>
    <subcellularLocation>
        <location evidence="1">Mitochondrion matrix</location>
        <location evidence="1">Mitochondrion nucleoid</location>
    </subcellularLocation>
</comment>
<comment type="disruption phenotype">
    <text evidence="3">Conditional knockout mice are fertile but rapidly die around week 26. Mitochondrial morphology is severely altered in the central and peripheral nervous system, as well as in the cerebellum.</text>
</comment>
<comment type="similarity">
    <text evidence="5">Belongs to the short-chain dehydrogenases/reductases (SDR) family.</text>
</comment>
<comment type="sequence caution" evidence="5">
    <conflict type="erroneous initiation">
        <sequence resource="EMBL-CDS" id="AAB57689"/>
    </conflict>
    <text>Extended N-terminus.</text>
</comment>
<dbReference type="EC" id="1.1.1.35" evidence="1"/>
<dbReference type="EC" id="1.1.1.62" evidence="1"/>
<dbReference type="EC" id="1.1.1.239" evidence="1"/>
<dbReference type="EC" id="1.1.1.178" evidence="1"/>
<dbReference type="EC" id="1.1.1.53" evidence="1"/>
<dbReference type="EC" id="1.1.1.159" evidence="1"/>
<dbReference type="EMBL" id="U96116">
    <property type="protein sequence ID" value="AAB57689.1"/>
    <property type="status" value="ALT_INIT"/>
    <property type="molecule type" value="mRNA"/>
</dbReference>
<dbReference type="CCDS" id="CCDS30471.1"/>
<dbReference type="SMR" id="O08756"/>
<dbReference type="FunCoup" id="O08756">
    <property type="interactions" value="809"/>
</dbReference>
<dbReference type="IntAct" id="O08756">
    <property type="interactions" value="22"/>
</dbReference>
<dbReference type="MINT" id="O08756"/>
<dbReference type="STRING" id="10090.ENSMUSP00000026289"/>
<dbReference type="BindingDB" id="O08756"/>
<dbReference type="ChEMBL" id="CHEMBL4295650"/>
<dbReference type="GlyGen" id="O08756">
    <property type="glycosylation" value="2 sites, 1 N-linked glycan (1 site), 1 O-linked glycan (1 site)"/>
</dbReference>
<dbReference type="iPTMnet" id="O08756"/>
<dbReference type="PhosphoSitePlus" id="O08756"/>
<dbReference type="SwissPalm" id="O08756"/>
<dbReference type="jPOST" id="O08756"/>
<dbReference type="PaxDb" id="10090-ENSMUSP00000026289"/>
<dbReference type="PeptideAtlas" id="O08756"/>
<dbReference type="ProteomicsDB" id="269724"/>
<dbReference type="Pumba" id="O08756"/>
<dbReference type="AGR" id="MGI:1333871"/>
<dbReference type="MGI" id="MGI:1333871">
    <property type="gene designation" value="Hsd17b10"/>
</dbReference>
<dbReference type="eggNOG" id="KOG1199">
    <property type="taxonomic scope" value="Eukaryota"/>
</dbReference>
<dbReference type="InParanoid" id="O08756"/>
<dbReference type="PhylomeDB" id="O08756"/>
<dbReference type="Reactome" id="R-MMU-70895">
    <property type="pathway name" value="Branched-chain amino acid catabolism"/>
</dbReference>
<dbReference type="Reactome" id="R-MMU-9837999">
    <property type="pathway name" value="Mitochondrial protein degradation"/>
</dbReference>
<dbReference type="UniPathway" id="UPA00221"/>
<dbReference type="UniPathway" id="UPA00364"/>
<dbReference type="UniPathway" id="UPA00659"/>
<dbReference type="ChiTaRS" id="Hsd17b10">
    <property type="organism name" value="mouse"/>
</dbReference>
<dbReference type="PRO" id="PR:O08756"/>
<dbReference type="Proteomes" id="UP000000589">
    <property type="component" value="Unplaced"/>
</dbReference>
<dbReference type="RNAct" id="O08756">
    <property type="molecule type" value="protein"/>
</dbReference>
<dbReference type="GO" id="GO:0005783">
    <property type="term" value="C:endoplasmic reticulum"/>
    <property type="evidence" value="ECO:0000314"/>
    <property type="project" value="MGI"/>
</dbReference>
<dbReference type="GO" id="GO:0005743">
    <property type="term" value="C:mitochondrial inner membrane"/>
    <property type="evidence" value="ECO:0007005"/>
    <property type="project" value="MGI"/>
</dbReference>
<dbReference type="GO" id="GO:0042645">
    <property type="term" value="C:mitochondrial nucleoid"/>
    <property type="evidence" value="ECO:0000314"/>
    <property type="project" value="MGI"/>
</dbReference>
<dbReference type="GO" id="GO:0030678">
    <property type="term" value="C:mitochondrial ribonuclease P complex"/>
    <property type="evidence" value="ECO:0000250"/>
    <property type="project" value="UniProtKB"/>
</dbReference>
<dbReference type="GO" id="GO:0005739">
    <property type="term" value="C:mitochondrion"/>
    <property type="evidence" value="ECO:0000314"/>
    <property type="project" value="UniProtKB"/>
</dbReference>
<dbReference type="GO" id="GO:0044594">
    <property type="term" value="F:17-beta-hydroxysteroid dehydrogenase (NAD+) activity"/>
    <property type="evidence" value="ECO:0000250"/>
    <property type="project" value="UniProtKB"/>
</dbReference>
<dbReference type="GO" id="GO:0047015">
    <property type="term" value="F:3-hydroxy-2-methylbutyryl-CoA dehydrogenase activity"/>
    <property type="evidence" value="ECO:0000250"/>
    <property type="project" value="UniProtKB"/>
</dbReference>
<dbReference type="GO" id="GO:0003857">
    <property type="term" value="F:3-hydroxyacyl-CoA dehydrogenase activity"/>
    <property type="evidence" value="ECO:0000250"/>
    <property type="project" value="UniProtKB"/>
</dbReference>
<dbReference type="GO" id="GO:0047044">
    <property type="term" value="F:androstan-3-alpha,17-beta-diol dehydrogenase (NAD+) activity"/>
    <property type="evidence" value="ECO:0007669"/>
    <property type="project" value="UniProtKB-EC"/>
</dbReference>
<dbReference type="GO" id="GO:0106281">
    <property type="term" value="F:chenodeoxycholate 7-alpha-dehydrogenase (NAD+) activity"/>
    <property type="evidence" value="ECO:0000250"/>
    <property type="project" value="UniProtKB"/>
</dbReference>
<dbReference type="GO" id="GO:0008709">
    <property type="term" value="F:cholate 7-alpha-dehydrogenase (NAD+) activity"/>
    <property type="evidence" value="ECO:0000250"/>
    <property type="project" value="UniProtKB"/>
</dbReference>
<dbReference type="GO" id="GO:0004303">
    <property type="term" value="F:estradiol 17-beta-dehydrogenase [NAD(P)+] activity"/>
    <property type="evidence" value="ECO:0007669"/>
    <property type="project" value="UniProtKB-EC"/>
</dbReference>
<dbReference type="GO" id="GO:0106282">
    <property type="term" value="F:isoursodeoxycholate 7-beta-dehydrogenase (NAD+) activity"/>
    <property type="evidence" value="ECO:0000250"/>
    <property type="project" value="UniProtKB"/>
</dbReference>
<dbReference type="GO" id="GO:0047035">
    <property type="term" value="F:testosterone dehydrogenase (NAD+) activity"/>
    <property type="evidence" value="ECO:0000250"/>
    <property type="project" value="UniProtKB"/>
</dbReference>
<dbReference type="GO" id="GO:0030283">
    <property type="term" value="F:testosterone dehydrogenase [NAD(P)+] activity"/>
    <property type="evidence" value="ECO:0000250"/>
    <property type="project" value="UniProtKB"/>
</dbReference>
<dbReference type="GO" id="GO:0000049">
    <property type="term" value="F:tRNA binding"/>
    <property type="evidence" value="ECO:0000250"/>
    <property type="project" value="UniProtKB"/>
</dbReference>
<dbReference type="GO" id="GO:0106283">
    <property type="term" value="F:ursodeoxycholate 7-beta-dehydrogenase (NAD+) activity"/>
    <property type="evidence" value="ECO:0000250"/>
    <property type="project" value="UniProtKB"/>
</dbReference>
<dbReference type="GO" id="GO:0008209">
    <property type="term" value="P:androgen metabolic process"/>
    <property type="evidence" value="ECO:0000250"/>
    <property type="project" value="UniProtKB"/>
</dbReference>
<dbReference type="GO" id="GO:0006699">
    <property type="term" value="P:bile acid biosynthetic process"/>
    <property type="evidence" value="ECO:0000250"/>
    <property type="project" value="UniProtKB"/>
</dbReference>
<dbReference type="GO" id="GO:0062173">
    <property type="term" value="P:brexanolone metabolic process"/>
    <property type="evidence" value="ECO:0000250"/>
    <property type="project" value="UniProtKB"/>
</dbReference>
<dbReference type="GO" id="GO:0008207">
    <property type="term" value="P:C21-steroid hormone metabolic process"/>
    <property type="evidence" value="ECO:0000250"/>
    <property type="project" value="UniProtKB"/>
</dbReference>
<dbReference type="GO" id="GO:0008210">
    <property type="term" value="P:estrogen metabolic process"/>
    <property type="evidence" value="ECO:0000250"/>
    <property type="project" value="UniProtKB"/>
</dbReference>
<dbReference type="GO" id="GO:0006635">
    <property type="term" value="P:fatty acid beta-oxidation"/>
    <property type="evidence" value="ECO:0000250"/>
    <property type="project" value="UniProtKB"/>
</dbReference>
<dbReference type="GO" id="GO:0006550">
    <property type="term" value="P:isoleucine catabolic process"/>
    <property type="evidence" value="ECO:0000250"/>
    <property type="project" value="UniProtKB"/>
</dbReference>
<dbReference type="GO" id="GO:1990180">
    <property type="term" value="P:mitochondrial tRNA 3'-end processing"/>
    <property type="evidence" value="ECO:0000250"/>
    <property type="project" value="UniProtKB"/>
</dbReference>
<dbReference type="GO" id="GO:0097745">
    <property type="term" value="P:mitochondrial tRNA 5'-end processing"/>
    <property type="evidence" value="ECO:0000250"/>
    <property type="project" value="UniProtKB"/>
</dbReference>
<dbReference type="GO" id="GO:0070901">
    <property type="term" value="P:mitochondrial tRNA methylation"/>
    <property type="evidence" value="ECO:0000250"/>
    <property type="project" value="UniProtKB"/>
</dbReference>
<dbReference type="GO" id="GO:0051289">
    <property type="term" value="P:protein homotetramerization"/>
    <property type="evidence" value="ECO:0000250"/>
    <property type="project" value="UniProtKB"/>
</dbReference>
<dbReference type="CDD" id="cd05371">
    <property type="entry name" value="HSD10-like_SDR_c"/>
    <property type="match status" value="1"/>
</dbReference>
<dbReference type="FunFam" id="3.40.50.720:FF:000215">
    <property type="entry name" value="3-hydroxyacyl-CoA dehydrogenase type-2"/>
    <property type="match status" value="1"/>
</dbReference>
<dbReference type="Gene3D" id="3.40.50.720">
    <property type="entry name" value="NAD(P)-binding Rossmann-like Domain"/>
    <property type="match status" value="1"/>
</dbReference>
<dbReference type="InterPro" id="IPR036291">
    <property type="entry name" value="NAD(P)-bd_dom_sf"/>
</dbReference>
<dbReference type="InterPro" id="IPR020904">
    <property type="entry name" value="Sc_DH/Rdtase_CS"/>
</dbReference>
<dbReference type="InterPro" id="IPR002347">
    <property type="entry name" value="SDR_fam"/>
</dbReference>
<dbReference type="PANTHER" id="PTHR43658:SF8">
    <property type="entry name" value="17-BETA-HYDROXYSTEROID DEHYDROGENASE 14-RELATED"/>
    <property type="match status" value="1"/>
</dbReference>
<dbReference type="PANTHER" id="PTHR43658">
    <property type="entry name" value="SHORT-CHAIN DEHYDROGENASE/REDUCTASE"/>
    <property type="match status" value="1"/>
</dbReference>
<dbReference type="Pfam" id="PF00106">
    <property type="entry name" value="adh_short"/>
    <property type="match status" value="1"/>
</dbReference>
<dbReference type="PRINTS" id="PR00081">
    <property type="entry name" value="GDHRDH"/>
</dbReference>
<dbReference type="PRINTS" id="PR00080">
    <property type="entry name" value="SDRFAMILY"/>
</dbReference>
<dbReference type="SUPFAM" id="SSF51735">
    <property type="entry name" value="NAD(P)-binding Rossmann-fold domains"/>
    <property type="match status" value="1"/>
</dbReference>
<dbReference type="PROSITE" id="PS00061">
    <property type="entry name" value="ADH_SHORT"/>
    <property type="match status" value="1"/>
</dbReference>
<sequence>MAAAVRSVKGLVAVVTGGASGPWLATAKRLVGQGATAVLLDVPDSEGESQAKKLGESCIFAPANVTSEKEIQAALTLAKEKFGRIDVAVNCAGIAVAIKTYHQKKNKIHTLEDFQRVINVNLIGTFNVIRLVAGEMGQNEPDQGGQRGVIINTASVAAFEGQVGQAAYSASKGGIDGMTLPIARDLAPTGIRVVTIAPGLFATPLLTTLPEKVRNFLASQVPFPSRLGDPAEYAHLVQTIIENPFLNGEVIRLDGAIRMQP</sequence>